<proteinExistence type="inferred from homology"/>
<keyword id="KW-0963">Cytoplasm</keyword>
<keyword id="KW-1185">Reference proteome</keyword>
<keyword id="KW-0704">Schiff base</keyword>
<keyword id="KW-0784">Thiamine biosynthesis</keyword>
<keyword id="KW-0808">Transferase</keyword>
<accession>Q609Z5</accession>
<dbReference type="EC" id="2.8.1.10" evidence="1"/>
<dbReference type="EMBL" id="AE017282">
    <property type="protein sequence ID" value="AAU92650.1"/>
    <property type="status" value="ALT_INIT"/>
    <property type="molecule type" value="Genomic_DNA"/>
</dbReference>
<dbReference type="SMR" id="Q609Z5"/>
<dbReference type="STRING" id="243233.MCA1077"/>
<dbReference type="GeneID" id="88223374"/>
<dbReference type="KEGG" id="mca:MCA1077"/>
<dbReference type="eggNOG" id="COG2022">
    <property type="taxonomic scope" value="Bacteria"/>
</dbReference>
<dbReference type="eggNOG" id="COG2104">
    <property type="taxonomic scope" value="Bacteria"/>
</dbReference>
<dbReference type="HOGENOM" id="CLU_062233_1_1_6"/>
<dbReference type="UniPathway" id="UPA00060"/>
<dbReference type="Proteomes" id="UP000006821">
    <property type="component" value="Chromosome"/>
</dbReference>
<dbReference type="GO" id="GO:0005737">
    <property type="term" value="C:cytoplasm"/>
    <property type="evidence" value="ECO:0007669"/>
    <property type="project" value="UniProtKB-SubCell"/>
</dbReference>
<dbReference type="GO" id="GO:1990107">
    <property type="term" value="F:thiazole synthase activity"/>
    <property type="evidence" value="ECO:0007669"/>
    <property type="project" value="UniProtKB-EC"/>
</dbReference>
<dbReference type="GO" id="GO:0009229">
    <property type="term" value="P:thiamine diphosphate biosynthetic process"/>
    <property type="evidence" value="ECO:0007669"/>
    <property type="project" value="UniProtKB-UniRule"/>
</dbReference>
<dbReference type="CDD" id="cd04728">
    <property type="entry name" value="ThiG"/>
    <property type="match status" value="1"/>
</dbReference>
<dbReference type="FunFam" id="3.20.20.70:FF:000049">
    <property type="entry name" value="Thiazole synthase"/>
    <property type="match status" value="1"/>
</dbReference>
<dbReference type="Gene3D" id="3.20.20.70">
    <property type="entry name" value="Aldolase class I"/>
    <property type="match status" value="1"/>
</dbReference>
<dbReference type="HAMAP" id="MF_00443">
    <property type="entry name" value="ThiG"/>
    <property type="match status" value="1"/>
</dbReference>
<dbReference type="InterPro" id="IPR013785">
    <property type="entry name" value="Aldolase_TIM"/>
</dbReference>
<dbReference type="InterPro" id="IPR033983">
    <property type="entry name" value="Thiazole_synthase_ThiG"/>
</dbReference>
<dbReference type="InterPro" id="IPR008867">
    <property type="entry name" value="ThiG"/>
</dbReference>
<dbReference type="PANTHER" id="PTHR34266">
    <property type="entry name" value="THIAZOLE SYNTHASE"/>
    <property type="match status" value="1"/>
</dbReference>
<dbReference type="PANTHER" id="PTHR34266:SF2">
    <property type="entry name" value="THIAZOLE SYNTHASE"/>
    <property type="match status" value="1"/>
</dbReference>
<dbReference type="Pfam" id="PF05690">
    <property type="entry name" value="ThiG"/>
    <property type="match status" value="1"/>
</dbReference>
<dbReference type="SUPFAM" id="SSF110399">
    <property type="entry name" value="ThiG-like"/>
    <property type="match status" value="1"/>
</dbReference>
<protein>
    <recommendedName>
        <fullName evidence="1">Thiazole synthase</fullName>
        <ecNumber evidence="1">2.8.1.10</ecNumber>
    </recommendedName>
</protein>
<feature type="chain" id="PRO_0000162828" description="Thiazole synthase">
    <location>
        <begin position="1"/>
        <end position="270"/>
    </location>
</feature>
<feature type="active site" description="Schiff-base intermediate with DXP" evidence="1">
    <location>
        <position position="111"/>
    </location>
</feature>
<feature type="binding site" evidence="1">
    <location>
        <position position="172"/>
    </location>
    <ligand>
        <name>1-deoxy-D-xylulose 5-phosphate</name>
        <dbReference type="ChEBI" id="CHEBI:57792"/>
    </ligand>
</feature>
<feature type="binding site" evidence="1">
    <location>
        <begin position="198"/>
        <end position="199"/>
    </location>
    <ligand>
        <name>1-deoxy-D-xylulose 5-phosphate</name>
        <dbReference type="ChEBI" id="CHEBI:57792"/>
    </ligand>
</feature>
<feature type="binding site" evidence="1">
    <location>
        <begin position="220"/>
        <end position="221"/>
    </location>
    <ligand>
        <name>1-deoxy-D-xylulose 5-phosphate</name>
        <dbReference type="ChEBI" id="CHEBI:57792"/>
    </ligand>
</feature>
<evidence type="ECO:0000255" key="1">
    <source>
        <dbReference type="HAMAP-Rule" id="MF_00443"/>
    </source>
</evidence>
<evidence type="ECO:0000305" key="2"/>
<reference key="1">
    <citation type="journal article" date="2004" name="PLoS Biol.">
        <title>Genomic insights into methanotrophy: the complete genome sequence of Methylococcus capsulatus (Bath).</title>
        <authorList>
            <person name="Ward N.L."/>
            <person name="Larsen O."/>
            <person name="Sakwa J."/>
            <person name="Bruseth L."/>
            <person name="Khouri H.M."/>
            <person name="Durkin A.S."/>
            <person name="Dimitrov G."/>
            <person name="Jiang L."/>
            <person name="Scanlan D."/>
            <person name="Kang K.H."/>
            <person name="Lewis M.R."/>
            <person name="Nelson K.E."/>
            <person name="Methe B.A."/>
            <person name="Wu M."/>
            <person name="Heidelberg J.F."/>
            <person name="Paulsen I.T."/>
            <person name="Fouts D.E."/>
            <person name="Ravel J."/>
            <person name="Tettelin H."/>
            <person name="Ren Q."/>
            <person name="Read T.D."/>
            <person name="DeBoy R.T."/>
            <person name="Seshadri R."/>
            <person name="Salzberg S.L."/>
            <person name="Jensen H.B."/>
            <person name="Birkeland N.K."/>
            <person name="Nelson W.C."/>
            <person name="Dodson R.J."/>
            <person name="Grindhaug S.H."/>
            <person name="Holt I.E."/>
            <person name="Eidhammer I."/>
            <person name="Jonasen I."/>
            <person name="Vanaken S."/>
            <person name="Utterback T.R."/>
            <person name="Feldblyum T.V."/>
            <person name="Fraser C.M."/>
            <person name="Lillehaug J.R."/>
            <person name="Eisen J.A."/>
        </authorList>
    </citation>
    <scope>NUCLEOTIDE SEQUENCE [LARGE SCALE GENOMIC DNA]</scope>
    <source>
        <strain>ATCC 33009 / NCIMB 11132 / Bath</strain>
    </source>
</reference>
<comment type="function">
    <text evidence="1">Catalyzes the rearrangement of 1-deoxy-D-xylulose 5-phosphate (DXP) to produce the thiazole phosphate moiety of thiamine. Sulfur is provided by the thiocarboxylate moiety of the carrier protein ThiS. In vitro, sulfur can be provided by H(2)S.</text>
</comment>
<comment type="catalytic activity">
    <reaction evidence="1">
        <text>[ThiS sulfur-carrier protein]-C-terminal-Gly-aminoethanethioate + 2-iminoacetate + 1-deoxy-D-xylulose 5-phosphate = [ThiS sulfur-carrier protein]-C-terminal Gly-Gly + 2-[(2R,5Z)-2-carboxy-4-methylthiazol-5(2H)-ylidene]ethyl phosphate + 2 H2O + H(+)</text>
        <dbReference type="Rhea" id="RHEA:26297"/>
        <dbReference type="Rhea" id="RHEA-COMP:12909"/>
        <dbReference type="Rhea" id="RHEA-COMP:19908"/>
        <dbReference type="ChEBI" id="CHEBI:15377"/>
        <dbReference type="ChEBI" id="CHEBI:15378"/>
        <dbReference type="ChEBI" id="CHEBI:57792"/>
        <dbReference type="ChEBI" id="CHEBI:62899"/>
        <dbReference type="ChEBI" id="CHEBI:77846"/>
        <dbReference type="ChEBI" id="CHEBI:90778"/>
        <dbReference type="ChEBI" id="CHEBI:232372"/>
        <dbReference type="EC" id="2.8.1.10"/>
    </reaction>
</comment>
<comment type="pathway">
    <text evidence="1">Cofactor biosynthesis; thiamine diphosphate biosynthesis.</text>
</comment>
<comment type="subunit">
    <text evidence="1">Homotetramer. Forms heterodimers with either ThiH or ThiS.</text>
</comment>
<comment type="subcellular location">
    <subcellularLocation>
        <location evidence="1">Cytoplasm</location>
    </subcellularLocation>
</comment>
<comment type="similarity">
    <text evidence="1">Belongs to the ThiG family.</text>
</comment>
<comment type="sequence caution" evidence="2">
    <conflict type="erroneous initiation">
        <sequence resource="EMBL-CDS" id="AAU92650"/>
    </conflict>
</comment>
<name>THIG_METCA</name>
<sequence>MEIVHAIGGGQGDPLVIAGKAYTSRLLVGTGKYKDLAETRAAVEMAGAEIVTVAIRRTNIGQDPGQPSLLDVIPPDRYTILPNTAGCYTVEDAVRTCRLARELLGGHRLVKLEVLGDPTTLFPDVTATLEAAEILVRDGFDVMVYTNDDPIIAKRLEEIGCVAVMPLAAPIGSGLGIRNPYNILTIVENAKVPVLVDAGVGTASDAAVAMELGCDGVLMNTAIAEAKNPVLMASAMKKAIEAGREAFLAGRMPRRRFASASSPLAGLFFD</sequence>
<organism>
    <name type="scientific">Methylococcus capsulatus (strain ATCC 33009 / NCIMB 11132 / Bath)</name>
    <dbReference type="NCBI Taxonomy" id="243233"/>
    <lineage>
        <taxon>Bacteria</taxon>
        <taxon>Pseudomonadati</taxon>
        <taxon>Pseudomonadota</taxon>
        <taxon>Gammaproteobacteria</taxon>
        <taxon>Methylococcales</taxon>
        <taxon>Methylococcaceae</taxon>
        <taxon>Methylococcus</taxon>
    </lineage>
</organism>
<gene>
    <name evidence="1" type="primary">thiG</name>
    <name type="ordered locus">MCA1077</name>
</gene>